<feature type="chain" id="PRO_0000291578" description="Lysocardiolipin acyltransferase 1">
    <location>
        <begin position="1"/>
        <end position="376"/>
    </location>
</feature>
<feature type="transmembrane region" description="Helical" evidence="3">
    <location>
        <begin position="9"/>
        <end position="29"/>
    </location>
</feature>
<feature type="transmembrane region" description="Helical" evidence="3">
    <location>
        <begin position="48"/>
        <end position="68"/>
    </location>
</feature>
<feature type="transmembrane region" description="Helical" evidence="3">
    <location>
        <begin position="309"/>
        <end position="329"/>
    </location>
</feature>
<feature type="transmembrane region" description="Helical" evidence="3">
    <location>
        <begin position="336"/>
        <end position="356"/>
    </location>
</feature>
<feature type="short sequence motif" description="HXXXXD motif" evidence="2">
    <location>
        <begin position="85"/>
        <end position="90"/>
    </location>
</feature>
<feature type="modified residue" description="N6-acetyllysine" evidence="1">
    <location>
        <position position="183"/>
    </location>
</feature>
<feature type="glycosylation site" description="N-linked (GlcNAc...) asparagine" evidence="3">
    <location>
        <position position="35"/>
    </location>
</feature>
<sequence>MVSWKGIYFILFLFAGSFFGSIFMLGPILPLMFINLSWYRWISSRLVATWLTLPVALLETMFGVRVVITGDAFVPGERSVIIMNHRTRVDWMFLWNCLMRYSYLRVEKICLKSSLKSVPGFGWAMQVAAFIFIHRKWKDDKSHFEDMIDYFCAIHEPLQLLIFPEGTDLTENNKARSNDFAEKNGLQKYEYVLHPRTTGFTFVVDRLREGKNLDAVHDITVAYPYNIPQTEKHLLLGDFPKEIHFHVQRYPADSLPTSKEDLQLWCHRRWEEKEERLRSFYQGEKNFHFTGQSTVPPCKSELRVLVVKLLSIVYWALFCSAMCLLIYLYSPVRWYFIISIVFFVLQERIFGGLEIIELACYRFLHKHPHLNSKKNE</sequence>
<proteinExistence type="evidence at protein level"/>
<organism>
    <name type="scientific">Mus musculus</name>
    <name type="common">Mouse</name>
    <dbReference type="NCBI Taxonomy" id="10090"/>
    <lineage>
        <taxon>Eukaryota</taxon>
        <taxon>Metazoa</taxon>
        <taxon>Chordata</taxon>
        <taxon>Craniata</taxon>
        <taxon>Vertebrata</taxon>
        <taxon>Euteleostomi</taxon>
        <taxon>Mammalia</taxon>
        <taxon>Eutheria</taxon>
        <taxon>Euarchontoglires</taxon>
        <taxon>Glires</taxon>
        <taxon>Rodentia</taxon>
        <taxon>Myomorpha</taxon>
        <taxon>Muroidea</taxon>
        <taxon>Muridae</taxon>
        <taxon>Murinae</taxon>
        <taxon>Mus</taxon>
        <taxon>Mus</taxon>
    </lineage>
</organism>
<name>LCLT1_MOUSE</name>
<keyword id="KW-0007">Acetylation</keyword>
<keyword id="KW-0012">Acyltransferase</keyword>
<keyword id="KW-0217">Developmental protein</keyword>
<keyword id="KW-0256">Endoplasmic reticulum</keyword>
<keyword id="KW-0325">Glycoprotein</keyword>
<keyword id="KW-0444">Lipid biosynthesis</keyword>
<keyword id="KW-0443">Lipid metabolism</keyword>
<keyword id="KW-0472">Membrane</keyword>
<keyword id="KW-0594">Phospholipid biosynthesis</keyword>
<keyword id="KW-1208">Phospholipid metabolism</keyword>
<keyword id="KW-1185">Reference proteome</keyword>
<keyword id="KW-0808">Transferase</keyword>
<keyword id="KW-0812">Transmembrane</keyword>
<keyword id="KW-1133">Transmembrane helix</keyword>
<evidence type="ECO:0000250" key="1">
    <source>
        <dbReference type="UniProtKB" id="Q6UWP7"/>
    </source>
</evidence>
<evidence type="ECO:0000250" key="2">
    <source>
        <dbReference type="UniProtKB" id="Q9D517"/>
    </source>
</evidence>
<evidence type="ECO:0000255" key="3"/>
<evidence type="ECO:0000269" key="4">
    <source>
    </source>
</evidence>
<evidence type="ECO:0000269" key="5">
    <source>
    </source>
</evidence>
<evidence type="ECO:0000269" key="6">
    <source>
    </source>
</evidence>
<evidence type="ECO:0000269" key="7">
    <source>
    </source>
</evidence>
<evidence type="ECO:0000303" key="8">
    <source>
    </source>
</evidence>
<evidence type="ECO:0000305" key="9"/>
<evidence type="ECO:0000305" key="10">
    <source>
    </source>
</evidence>
<evidence type="ECO:0000305" key="11">
    <source>
    </source>
</evidence>
<protein>
    <recommendedName>
        <fullName>Lysocardiolipin acyltransferase 1</fullName>
        <ecNumber evidence="4">2.3.1.-</ecNumber>
    </recommendedName>
    <alternativeName>
        <fullName evidence="1">1-acylglycerol-3-phosphate O-acyltransferase 8</fullName>
        <shortName>1-AGP acyltransferase 8</shortName>
        <shortName>1-AGPAT 8</shortName>
        <ecNumber evidence="1">2.3.1.51</ecNumber>
    </alternativeName>
    <alternativeName>
        <fullName evidence="8">Acyl-CoA:lysocardiolipin acyltransferase 1</fullName>
    </alternativeName>
</protein>
<gene>
    <name type="primary">Lclat1</name>
    <name evidence="1" type="synonym">Agpat8</name>
    <name evidence="8" type="synonym">Alcat1</name>
    <name type="synonym">Gm91</name>
    <name type="synonym">Lycat</name>
</gene>
<dbReference type="EC" id="2.3.1.-" evidence="4"/>
<dbReference type="EC" id="2.3.1.51" evidence="1"/>
<dbReference type="EMBL" id="AC112949">
    <property type="status" value="NOT_ANNOTATED_CDS"/>
    <property type="molecule type" value="Genomic_DNA"/>
</dbReference>
<dbReference type="EMBL" id="AK144580">
    <property type="protein sequence ID" value="BAE25946.1"/>
    <property type="molecule type" value="mRNA"/>
</dbReference>
<dbReference type="CCDS" id="CCDS37689.1"/>
<dbReference type="RefSeq" id="NP_001074540.1">
    <property type="nucleotide sequence ID" value="NM_001081071.2"/>
</dbReference>
<dbReference type="RefSeq" id="NP_001171438.1">
    <property type="nucleotide sequence ID" value="NM_001177967.1"/>
</dbReference>
<dbReference type="RefSeq" id="NP_001171439.1">
    <property type="nucleotide sequence ID" value="NM_001177968.1"/>
</dbReference>
<dbReference type="RefSeq" id="XP_011244712.1">
    <property type="nucleotide sequence ID" value="XM_011246410.2"/>
</dbReference>
<dbReference type="BioGRID" id="230349">
    <property type="interactions" value="4"/>
</dbReference>
<dbReference type="FunCoup" id="Q3UN02">
    <property type="interactions" value="2748"/>
</dbReference>
<dbReference type="STRING" id="10090.ENSMUSP00000068690"/>
<dbReference type="SwissLipids" id="SLP:000000291"/>
<dbReference type="GlyCosmos" id="Q3UN02">
    <property type="glycosylation" value="1 site, No reported glycans"/>
</dbReference>
<dbReference type="GlyGen" id="Q3UN02">
    <property type="glycosylation" value="1 site"/>
</dbReference>
<dbReference type="iPTMnet" id="Q3UN02"/>
<dbReference type="PhosphoSitePlus" id="Q3UN02"/>
<dbReference type="SwissPalm" id="Q3UN02"/>
<dbReference type="jPOST" id="Q3UN02"/>
<dbReference type="PaxDb" id="10090-ENSMUSP00000068690"/>
<dbReference type="ProteomicsDB" id="265048"/>
<dbReference type="Pumba" id="Q3UN02"/>
<dbReference type="Antibodypedia" id="28989">
    <property type="antibodies" value="91 antibodies from 19 providers"/>
</dbReference>
<dbReference type="Ensembl" id="ENSMUST00000067545.8">
    <property type="protein sequence ID" value="ENSMUSP00000068690.7"/>
    <property type="gene ID" value="ENSMUSG00000054469.15"/>
</dbReference>
<dbReference type="GeneID" id="225010"/>
<dbReference type="KEGG" id="mmu:225010"/>
<dbReference type="UCSC" id="uc008dnh.2">
    <property type="organism name" value="mouse"/>
</dbReference>
<dbReference type="AGR" id="MGI:2684937"/>
<dbReference type="CTD" id="253558"/>
<dbReference type="MGI" id="MGI:2684937">
    <property type="gene designation" value="Lclat1"/>
</dbReference>
<dbReference type="VEuPathDB" id="HostDB:ENSMUSG00000054469"/>
<dbReference type="eggNOG" id="KOG1505">
    <property type="taxonomic scope" value="Eukaryota"/>
</dbReference>
<dbReference type="GeneTree" id="ENSGT00950000182836"/>
<dbReference type="HOGENOM" id="CLU_041844_4_0_1"/>
<dbReference type="InParanoid" id="Q3UN02"/>
<dbReference type="OMA" id="VANHVAW"/>
<dbReference type="OrthoDB" id="186786at2759"/>
<dbReference type="PhylomeDB" id="Q3UN02"/>
<dbReference type="TreeFam" id="TF314346"/>
<dbReference type="BRENDA" id="2.3.1.23">
    <property type="organism ID" value="3474"/>
</dbReference>
<dbReference type="BRENDA" id="2.3.1.62">
    <property type="organism ID" value="3474"/>
</dbReference>
<dbReference type="Reactome" id="R-MMU-1482798">
    <property type="pathway name" value="Acyl chain remodeling of CL"/>
</dbReference>
<dbReference type="Reactome" id="R-MMU-1483166">
    <property type="pathway name" value="Synthesis of PA"/>
</dbReference>
<dbReference type="UniPathway" id="UPA00557">
    <property type="reaction ID" value="UER00613"/>
</dbReference>
<dbReference type="BioGRID-ORCS" id="225010">
    <property type="hits" value="3 hits in 80 CRISPR screens"/>
</dbReference>
<dbReference type="ChiTaRS" id="Lclat1">
    <property type="organism name" value="mouse"/>
</dbReference>
<dbReference type="PRO" id="PR:Q3UN02"/>
<dbReference type="Proteomes" id="UP000000589">
    <property type="component" value="Chromosome 17"/>
</dbReference>
<dbReference type="RNAct" id="Q3UN02">
    <property type="molecule type" value="protein"/>
</dbReference>
<dbReference type="Bgee" id="ENSMUSG00000054469">
    <property type="expression patterns" value="Expressed in epithelium of small intestine and 263 other cell types or tissues"/>
</dbReference>
<dbReference type="ExpressionAtlas" id="Q3UN02">
    <property type="expression patterns" value="baseline and differential"/>
</dbReference>
<dbReference type="GO" id="GO:0005829">
    <property type="term" value="C:cytosol"/>
    <property type="evidence" value="ECO:0007669"/>
    <property type="project" value="Ensembl"/>
</dbReference>
<dbReference type="GO" id="GO:0005783">
    <property type="term" value="C:endoplasmic reticulum"/>
    <property type="evidence" value="ECO:0000314"/>
    <property type="project" value="MGI"/>
</dbReference>
<dbReference type="GO" id="GO:0005789">
    <property type="term" value="C:endoplasmic reticulum membrane"/>
    <property type="evidence" value="ECO:0007669"/>
    <property type="project" value="UniProtKB-SubCell"/>
</dbReference>
<dbReference type="GO" id="GO:0003841">
    <property type="term" value="F:1-acylglycerol-3-phosphate O-acyltransferase activity"/>
    <property type="evidence" value="ECO:0000250"/>
    <property type="project" value="UniProtKB"/>
</dbReference>
<dbReference type="GO" id="GO:0016746">
    <property type="term" value="F:acyltransferase activity"/>
    <property type="evidence" value="ECO:0000314"/>
    <property type="project" value="MGI"/>
</dbReference>
<dbReference type="GO" id="GO:0035965">
    <property type="term" value="P:cardiolipin acyl-chain remodeling"/>
    <property type="evidence" value="ECO:0000304"/>
    <property type="project" value="UniProtKB"/>
</dbReference>
<dbReference type="GO" id="GO:0016024">
    <property type="term" value="P:CDP-diacylglycerol biosynthetic process"/>
    <property type="evidence" value="ECO:0007669"/>
    <property type="project" value="UniProtKB-UniPathway"/>
</dbReference>
<dbReference type="CDD" id="cd07990">
    <property type="entry name" value="LPLAT_LCLAT1-like"/>
    <property type="match status" value="1"/>
</dbReference>
<dbReference type="InterPro" id="IPR032098">
    <property type="entry name" value="Acyltransf_C"/>
</dbReference>
<dbReference type="InterPro" id="IPR002123">
    <property type="entry name" value="Plipid/glycerol_acylTrfase"/>
</dbReference>
<dbReference type="PANTHER" id="PTHR10983">
    <property type="entry name" value="1-ACYLGLYCEROL-3-PHOSPHATE ACYLTRANSFERASE-RELATED"/>
    <property type="match status" value="1"/>
</dbReference>
<dbReference type="PANTHER" id="PTHR10983:SF16">
    <property type="entry name" value="LYSOCARDIOLIPIN ACYLTRANSFERASE 1"/>
    <property type="match status" value="1"/>
</dbReference>
<dbReference type="Pfam" id="PF16076">
    <property type="entry name" value="Acyltransf_C"/>
    <property type="match status" value="1"/>
</dbReference>
<dbReference type="Pfam" id="PF01553">
    <property type="entry name" value="Acyltransferase"/>
    <property type="match status" value="1"/>
</dbReference>
<dbReference type="SMART" id="SM00563">
    <property type="entry name" value="PlsC"/>
    <property type="match status" value="1"/>
</dbReference>
<dbReference type="SUPFAM" id="SSF69593">
    <property type="entry name" value="Glycerol-3-phosphate (1)-acyltransferase"/>
    <property type="match status" value="1"/>
</dbReference>
<accession>Q3UN02</accession>
<reference key="1">
    <citation type="journal article" date="2009" name="PLoS Biol.">
        <title>Lineage-specific biology revealed by a finished genome assembly of the mouse.</title>
        <authorList>
            <person name="Church D.M."/>
            <person name="Goodstadt L."/>
            <person name="Hillier L.W."/>
            <person name="Zody M.C."/>
            <person name="Goldstein S."/>
            <person name="She X."/>
            <person name="Bult C.J."/>
            <person name="Agarwala R."/>
            <person name="Cherry J.L."/>
            <person name="DiCuccio M."/>
            <person name="Hlavina W."/>
            <person name="Kapustin Y."/>
            <person name="Meric P."/>
            <person name="Maglott D."/>
            <person name="Birtle Z."/>
            <person name="Marques A.C."/>
            <person name="Graves T."/>
            <person name="Zhou S."/>
            <person name="Teague B."/>
            <person name="Potamousis K."/>
            <person name="Churas C."/>
            <person name="Place M."/>
            <person name="Herschleb J."/>
            <person name="Runnheim R."/>
            <person name="Forrest D."/>
            <person name="Amos-Landgraf J."/>
            <person name="Schwartz D.C."/>
            <person name="Cheng Z."/>
            <person name="Lindblad-Toh K."/>
            <person name="Eichler E.E."/>
            <person name="Ponting C.P."/>
        </authorList>
    </citation>
    <scope>NUCLEOTIDE SEQUENCE [LARGE SCALE GENOMIC DNA]</scope>
    <source>
        <strain>C57BL/6J</strain>
    </source>
</reference>
<reference key="2">
    <citation type="journal article" date="2005" name="Science">
        <title>The transcriptional landscape of the mammalian genome.</title>
        <authorList>
            <person name="Carninci P."/>
            <person name="Kasukawa T."/>
            <person name="Katayama S."/>
            <person name="Gough J."/>
            <person name="Frith M.C."/>
            <person name="Maeda N."/>
            <person name="Oyama R."/>
            <person name="Ravasi T."/>
            <person name="Lenhard B."/>
            <person name="Wells C."/>
            <person name="Kodzius R."/>
            <person name="Shimokawa K."/>
            <person name="Bajic V.B."/>
            <person name="Brenner S.E."/>
            <person name="Batalov S."/>
            <person name="Forrest A.R."/>
            <person name="Zavolan M."/>
            <person name="Davis M.J."/>
            <person name="Wilming L.G."/>
            <person name="Aidinis V."/>
            <person name="Allen J.E."/>
            <person name="Ambesi-Impiombato A."/>
            <person name="Apweiler R."/>
            <person name="Aturaliya R.N."/>
            <person name="Bailey T.L."/>
            <person name="Bansal M."/>
            <person name="Baxter L."/>
            <person name="Beisel K.W."/>
            <person name="Bersano T."/>
            <person name="Bono H."/>
            <person name="Chalk A.M."/>
            <person name="Chiu K.P."/>
            <person name="Choudhary V."/>
            <person name="Christoffels A."/>
            <person name="Clutterbuck D.R."/>
            <person name="Crowe M.L."/>
            <person name="Dalla E."/>
            <person name="Dalrymple B.P."/>
            <person name="de Bono B."/>
            <person name="Della Gatta G."/>
            <person name="di Bernardo D."/>
            <person name="Down T."/>
            <person name="Engstrom P."/>
            <person name="Fagiolini M."/>
            <person name="Faulkner G."/>
            <person name="Fletcher C.F."/>
            <person name="Fukushima T."/>
            <person name="Furuno M."/>
            <person name="Futaki S."/>
            <person name="Gariboldi M."/>
            <person name="Georgii-Hemming P."/>
            <person name="Gingeras T.R."/>
            <person name="Gojobori T."/>
            <person name="Green R.E."/>
            <person name="Gustincich S."/>
            <person name="Harbers M."/>
            <person name="Hayashi Y."/>
            <person name="Hensch T.K."/>
            <person name="Hirokawa N."/>
            <person name="Hill D."/>
            <person name="Huminiecki L."/>
            <person name="Iacono M."/>
            <person name="Ikeo K."/>
            <person name="Iwama A."/>
            <person name="Ishikawa T."/>
            <person name="Jakt M."/>
            <person name="Kanapin A."/>
            <person name="Katoh M."/>
            <person name="Kawasawa Y."/>
            <person name="Kelso J."/>
            <person name="Kitamura H."/>
            <person name="Kitano H."/>
            <person name="Kollias G."/>
            <person name="Krishnan S.P."/>
            <person name="Kruger A."/>
            <person name="Kummerfeld S.K."/>
            <person name="Kurochkin I.V."/>
            <person name="Lareau L.F."/>
            <person name="Lazarevic D."/>
            <person name="Lipovich L."/>
            <person name="Liu J."/>
            <person name="Liuni S."/>
            <person name="McWilliam S."/>
            <person name="Madan Babu M."/>
            <person name="Madera M."/>
            <person name="Marchionni L."/>
            <person name="Matsuda H."/>
            <person name="Matsuzawa S."/>
            <person name="Miki H."/>
            <person name="Mignone F."/>
            <person name="Miyake S."/>
            <person name="Morris K."/>
            <person name="Mottagui-Tabar S."/>
            <person name="Mulder N."/>
            <person name="Nakano N."/>
            <person name="Nakauchi H."/>
            <person name="Ng P."/>
            <person name="Nilsson R."/>
            <person name="Nishiguchi S."/>
            <person name="Nishikawa S."/>
            <person name="Nori F."/>
            <person name="Ohara O."/>
            <person name="Okazaki Y."/>
            <person name="Orlando V."/>
            <person name="Pang K.C."/>
            <person name="Pavan W.J."/>
            <person name="Pavesi G."/>
            <person name="Pesole G."/>
            <person name="Petrovsky N."/>
            <person name="Piazza S."/>
            <person name="Reed J."/>
            <person name="Reid J.F."/>
            <person name="Ring B.Z."/>
            <person name="Ringwald M."/>
            <person name="Rost B."/>
            <person name="Ruan Y."/>
            <person name="Salzberg S.L."/>
            <person name="Sandelin A."/>
            <person name="Schneider C."/>
            <person name="Schoenbach C."/>
            <person name="Sekiguchi K."/>
            <person name="Semple C.A."/>
            <person name="Seno S."/>
            <person name="Sessa L."/>
            <person name="Sheng Y."/>
            <person name="Shibata Y."/>
            <person name="Shimada H."/>
            <person name="Shimada K."/>
            <person name="Silva D."/>
            <person name="Sinclair B."/>
            <person name="Sperling S."/>
            <person name="Stupka E."/>
            <person name="Sugiura K."/>
            <person name="Sultana R."/>
            <person name="Takenaka Y."/>
            <person name="Taki K."/>
            <person name="Tammoja K."/>
            <person name="Tan S.L."/>
            <person name="Tang S."/>
            <person name="Taylor M.S."/>
            <person name="Tegner J."/>
            <person name="Teichmann S.A."/>
            <person name="Ueda H.R."/>
            <person name="van Nimwegen E."/>
            <person name="Verardo R."/>
            <person name="Wei C.L."/>
            <person name="Yagi K."/>
            <person name="Yamanishi H."/>
            <person name="Zabarovsky E."/>
            <person name="Zhu S."/>
            <person name="Zimmer A."/>
            <person name="Hide W."/>
            <person name="Bult C."/>
            <person name="Grimmond S.M."/>
            <person name="Teasdale R.D."/>
            <person name="Liu E.T."/>
            <person name="Brusic V."/>
            <person name="Quackenbush J."/>
            <person name="Wahlestedt C."/>
            <person name="Mattick J.S."/>
            <person name="Hume D.A."/>
            <person name="Kai C."/>
            <person name="Sasaki D."/>
            <person name="Tomaru Y."/>
            <person name="Fukuda S."/>
            <person name="Kanamori-Katayama M."/>
            <person name="Suzuki M."/>
            <person name="Aoki J."/>
            <person name="Arakawa T."/>
            <person name="Iida J."/>
            <person name="Imamura K."/>
            <person name="Itoh M."/>
            <person name="Kato T."/>
            <person name="Kawaji H."/>
            <person name="Kawagashira N."/>
            <person name="Kawashima T."/>
            <person name="Kojima M."/>
            <person name="Kondo S."/>
            <person name="Konno H."/>
            <person name="Nakano K."/>
            <person name="Ninomiya N."/>
            <person name="Nishio T."/>
            <person name="Okada M."/>
            <person name="Plessy C."/>
            <person name="Shibata K."/>
            <person name="Shiraki T."/>
            <person name="Suzuki S."/>
            <person name="Tagami M."/>
            <person name="Waki K."/>
            <person name="Watahiki A."/>
            <person name="Okamura-Oho Y."/>
            <person name="Suzuki H."/>
            <person name="Kawai J."/>
            <person name="Hayashizaki Y."/>
        </authorList>
    </citation>
    <scope>NUCLEOTIDE SEQUENCE [LARGE SCALE MRNA] OF 1-281</scope>
    <source>
        <tissue>Lung</tissue>
    </source>
</reference>
<reference key="3">
    <citation type="journal article" date="2004" name="J. Biol. Chem.">
        <title>A novel cardiolipin-remodeling pathway revealed by a gene encoding an endoplasmic reticulum-associated acyl-CoA:lysocardiolipin acyltransferase (ALCAT1) in mouse.</title>
        <authorList>
            <person name="Cao J."/>
            <person name="Liu Y."/>
            <person name="Lockwood J."/>
            <person name="Burn P."/>
            <person name="Shi Y."/>
        </authorList>
    </citation>
    <scope>FUNCTION</scope>
    <scope>CATALYTIC ACTIVITY</scope>
    <scope>SUBCELLULAR LOCATION</scope>
    <scope>TISSUE SPECIFICITY</scope>
</reference>
<reference key="4">
    <citation type="journal article" date="2006" name="Arch. Biochem. Biophys.">
        <title>Functional characterization of human 1-acylglycerol-3-phosphate acyltransferase isoform 8: cloning, tissue distribution, gene structure, and enzymatic activity.</title>
        <authorList>
            <person name="Agarwal A.K."/>
            <person name="Barnes R.I."/>
            <person name="Garg A."/>
        </authorList>
    </citation>
    <scope>TISSUE SPECIFICITY</scope>
</reference>
<reference key="5">
    <citation type="journal article" date="2007" name="Blood">
        <title>Mouse lysocardiolipin acyltransferase controls the development of hematopoietic and endothelial lineages during in vitro embryonic stem-cell differentiation.</title>
        <authorList>
            <person name="Wang C."/>
            <person name="Faloon P.W."/>
            <person name="Tan Z."/>
            <person name="Lv Y."/>
            <person name="Zhang P."/>
            <person name="Ge Y."/>
            <person name="Deng H."/>
            <person name="Xiong J.-W."/>
        </authorList>
    </citation>
    <scope>FUNCTION</scope>
    <scope>TISSUE SPECIFICITY</scope>
</reference>
<reference key="6">
    <citation type="journal article" date="2010" name="Cell">
        <title>A tissue-specific atlas of mouse protein phosphorylation and expression.</title>
        <authorList>
            <person name="Huttlin E.L."/>
            <person name="Jedrychowski M.P."/>
            <person name="Elias J.E."/>
            <person name="Goswami T."/>
            <person name="Rad R."/>
            <person name="Beausoleil S.A."/>
            <person name="Villen J."/>
            <person name="Haas W."/>
            <person name="Sowa M.E."/>
            <person name="Gygi S.P."/>
        </authorList>
    </citation>
    <scope>IDENTIFICATION BY MASS SPECTROMETRY [LARGE SCALE ANALYSIS]</scope>
    <source>
        <tissue>Heart</tissue>
        <tissue>Lung</tissue>
        <tissue>Pancreas</tissue>
        <tissue>Spleen</tissue>
        <tissue>Testis</tissue>
    </source>
</reference>
<reference key="7">
    <citation type="journal article" date="2010" name="Mol. Biol. Cell">
        <title>Intracellular phospholipase A1 and acyltransferase, which are involved in Caenorhabditis elegans stem cell divisions, determine the sn-1 fatty acyl chain of phosphatidylinositol.</title>
        <authorList>
            <person name="Imae R."/>
            <person name="Inoue T."/>
            <person name="Kimura M."/>
            <person name="Kanamori T."/>
            <person name="Tomioka N.H."/>
            <person name="Kage-Nakadai E."/>
            <person name="Mitani S."/>
            <person name="Arai H."/>
        </authorList>
    </citation>
    <scope>FUNCTION</scope>
    <scope>CATALYTIC ACTIVITY</scope>
</reference>
<comment type="function">
    <text evidence="1 4 6 7">Exhibits acyl-CoA:lysocardiolipin acyltransferase (ALCAT) activity; catalyzes the reacylation of lyso-cardiolipin to cardiolipin (CL), a key step in CL remodeling (PubMed:15152008). Recognizes both monolysocardiolipin and dilysocardiolipin as substrates with a preference for linoleoyl-CoA and oleoyl-CoA as acyl donors (PubMed:15152008). Also exhibits 1-acyl-sn-glycerol-3-phosphate acyltransferase activity (AGPAT) activity; converts 1-acyl-sn-glycerol-3- phosphate (lysophosphatidic acid or LPA) into 1,2-diacyl-sn-glycerol-3- phosphate (phosphatidic acid or PA) by incorporating an acyl moiety at the sn-2 position of the glycerol backbone (By similarity). Possesses lysophosphatidylinositol acyltransferase (LPIAT) activity (PubMed:20668164). Possesses lysophosphatidylglycerol acyltransferase (LPGAT) activity (By similarity). Required for establishment of the hematopoietic and endothelial lineages (PubMed:17675553).</text>
</comment>
<comment type="catalytic activity">
    <reaction evidence="1">
        <text>a 1-acyl-sn-glycero-3-phosphate + an acyl-CoA = a 1,2-diacyl-sn-glycero-3-phosphate + CoA</text>
        <dbReference type="Rhea" id="RHEA:19709"/>
        <dbReference type="ChEBI" id="CHEBI:57287"/>
        <dbReference type="ChEBI" id="CHEBI:57970"/>
        <dbReference type="ChEBI" id="CHEBI:58342"/>
        <dbReference type="ChEBI" id="CHEBI:58608"/>
        <dbReference type="EC" id="2.3.1.51"/>
    </reaction>
    <physiologicalReaction direction="left-to-right" evidence="1">
        <dbReference type="Rhea" id="RHEA:19710"/>
    </physiologicalReaction>
</comment>
<comment type="catalytic activity">
    <reaction evidence="1">
        <text>a 1-acyl-sn-glycero-3-phospho-(1D-myo-inositol) + an acyl-CoA = a 1,2-diacyl-sn-glycero-3-phospho-(1D-myo-inositol) + CoA</text>
        <dbReference type="Rhea" id="RHEA:33195"/>
        <dbReference type="ChEBI" id="CHEBI:57287"/>
        <dbReference type="ChEBI" id="CHEBI:57880"/>
        <dbReference type="ChEBI" id="CHEBI:58342"/>
        <dbReference type="ChEBI" id="CHEBI:64771"/>
    </reaction>
    <physiologicalReaction direction="left-to-right" evidence="1">
        <dbReference type="Rhea" id="RHEA:33196"/>
    </physiologicalReaction>
</comment>
<comment type="catalytic activity">
    <reaction evidence="1">
        <text>1-acyl-sn-glycero-3-phospho-(1'-sn-glycerol) + an acyl-CoA = a 1,2-diacyl-sn-glycero-3-phospho-(1'-sn-glycerol) + CoA</text>
        <dbReference type="Rhea" id="RHEA:33203"/>
        <dbReference type="ChEBI" id="CHEBI:57287"/>
        <dbReference type="ChEBI" id="CHEBI:58342"/>
        <dbReference type="ChEBI" id="CHEBI:64716"/>
        <dbReference type="ChEBI" id="CHEBI:64840"/>
    </reaction>
    <physiologicalReaction direction="left-to-right" evidence="1">
        <dbReference type="Rhea" id="RHEA:33204"/>
    </physiologicalReaction>
</comment>
<comment type="catalytic activity">
    <reaction evidence="1">
        <text>1-hexadecanoyl-sn-glycero-3-phosphate + (9Z)-octadecenoyl-CoA = 1-hexadecanoyl-2-(9Z-octadecenoyl)-sn-glycero-3-phosphate + CoA</text>
        <dbReference type="Rhea" id="RHEA:33187"/>
        <dbReference type="ChEBI" id="CHEBI:57287"/>
        <dbReference type="ChEBI" id="CHEBI:57387"/>
        <dbReference type="ChEBI" id="CHEBI:57518"/>
        <dbReference type="ChEBI" id="CHEBI:64839"/>
    </reaction>
    <physiologicalReaction direction="left-to-right" evidence="1">
        <dbReference type="Rhea" id="RHEA:33188"/>
    </physiologicalReaction>
</comment>
<comment type="catalytic activity">
    <reaction evidence="1">
        <text>1-(9Z-octadecenoyl)-sn-glycero-3-phosphate + (9Z)-octadecenoyl-CoA = 1,2-di-(9Z-octadecenoyl)-sn-glycero-3-phosphate + CoA</text>
        <dbReference type="Rhea" id="RHEA:37131"/>
        <dbReference type="ChEBI" id="CHEBI:57287"/>
        <dbReference type="ChEBI" id="CHEBI:57387"/>
        <dbReference type="ChEBI" id="CHEBI:74544"/>
        <dbReference type="ChEBI" id="CHEBI:74546"/>
    </reaction>
    <physiologicalReaction direction="left-to-right" evidence="1">
        <dbReference type="Rhea" id="RHEA:37132"/>
    </physiologicalReaction>
</comment>
<comment type="catalytic activity">
    <reaction evidence="1">
        <text>1-(9Z,12Z)-octadecadienoyl-sn-glycero-3-phosphate + (9Z)-octadecenoyl-CoA = 1-(9Z,12Z)-octadecadienoyl-2-(9Z)-octadecenoyl-sn-glycero-3-phosphate + CoA</text>
        <dbReference type="Rhea" id="RHEA:37135"/>
        <dbReference type="ChEBI" id="CHEBI:57287"/>
        <dbReference type="ChEBI" id="CHEBI:57387"/>
        <dbReference type="ChEBI" id="CHEBI:74547"/>
        <dbReference type="ChEBI" id="CHEBI:74548"/>
    </reaction>
    <physiologicalReaction direction="left-to-right" evidence="1">
        <dbReference type="Rhea" id="RHEA:37136"/>
    </physiologicalReaction>
</comment>
<comment type="catalytic activity">
    <reaction evidence="1">
        <text>1-(9Z,12Z,15Z)-octadecatrienoyl-sn-glycero-3-phosphate + (9Z)-octadecenoyl-CoA = 1-(9Z,12Z,15Z)-octadecatrienoyl-2-(9Z)-octadecenoyl-sn-glycero-3-phosphate + CoA</text>
        <dbReference type="Rhea" id="RHEA:37139"/>
        <dbReference type="ChEBI" id="CHEBI:57287"/>
        <dbReference type="ChEBI" id="CHEBI:57387"/>
        <dbReference type="ChEBI" id="CHEBI:74549"/>
        <dbReference type="ChEBI" id="CHEBI:74550"/>
    </reaction>
    <physiologicalReaction direction="left-to-right" evidence="1">
        <dbReference type="Rhea" id="RHEA:37140"/>
    </physiologicalReaction>
</comment>
<comment type="catalytic activity">
    <reaction evidence="1">
        <text>1-(9Z-octadecenoyl)-sn-glycero-3-phosphate + hexadecanoyl-CoA = 1-(9Z)-octadecenoyl-2-hexadecanoyl-sn-glycero-3-phosphate + CoA</text>
        <dbReference type="Rhea" id="RHEA:37143"/>
        <dbReference type="ChEBI" id="CHEBI:57287"/>
        <dbReference type="ChEBI" id="CHEBI:57379"/>
        <dbReference type="ChEBI" id="CHEBI:74544"/>
        <dbReference type="ChEBI" id="CHEBI:74551"/>
    </reaction>
    <physiologicalReaction direction="left-to-right" evidence="1">
        <dbReference type="Rhea" id="RHEA:37144"/>
    </physiologicalReaction>
</comment>
<comment type="catalytic activity">
    <reaction evidence="1">
        <text>1-(9Z-octadecenoyl)-sn-glycero-3-phosphate + octadecanoyl-CoA = 1-(9Z-octadecenoyl)-2-octadecanoyl-sn-glycero-3-phosphate + CoA</text>
        <dbReference type="Rhea" id="RHEA:37147"/>
        <dbReference type="ChEBI" id="CHEBI:57287"/>
        <dbReference type="ChEBI" id="CHEBI:57394"/>
        <dbReference type="ChEBI" id="CHEBI:74544"/>
        <dbReference type="ChEBI" id="CHEBI:74552"/>
    </reaction>
    <physiologicalReaction direction="left-to-right" evidence="1">
        <dbReference type="Rhea" id="RHEA:37148"/>
    </physiologicalReaction>
</comment>
<comment type="catalytic activity">
    <reaction evidence="1">
        <text>1-acyl-sn-glycero-3-phospho-(1'-sn-glycerol) + (9Z)-octadecenoyl-CoA = 1-acyl-2-(9Z-octadecenoyl)-sn-glycero-3-phospho-(1'-sn-glycerol) + CoA</text>
        <dbReference type="Rhea" id="RHEA:37619"/>
        <dbReference type="ChEBI" id="CHEBI:57287"/>
        <dbReference type="ChEBI" id="CHEBI:57387"/>
        <dbReference type="ChEBI" id="CHEBI:64840"/>
        <dbReference type="ChEBI" id="CHEBI:75173"/>
    </reaction>
    <physiologicalReaction direction="left-to-right" evidence="1">
        <dbReference type="Rhea" id="RHEA:37620"/>
    </physiologicalReaction>
</comment>
<comment type="catalytic activity">
    <reaction evidence="1">
        <text>a 1-acyl-sn-glycero-3-phospho-(1D-myo-inositol) + (9Z)-octadecenoyl-CoA = a 1-acyl-2-(9Z-octadecenoyl)-sn-glycero-3-phospho-(1D-myo-inositol) + CoA</text>
        <dbReference type="Rhea" id="RHEA:37623"/>
        <dbReference type="ChEBI" id="CHEBI:57287"/>
        <dbReference type="ChEBI" id="CHEBI:57387"/>
        <dbReference type="ChEBI" id="CHEBI:64771"/>
        <dbReference type="ChEBI" id="CHEBI:75116"/>
    </reaction>
    <physiologicalReaction direction="left-to-right" evidence="1">
        <dbReference type="Rhea" id="RHEA:37624"/>
    </physiologicalReaction>
</comment>
<comment type="catalytic activity">
    <reaction evidence="1">
        <text>1-hexadecanoyl-sn-glycero-3-phospho-(1D-myo-inositol) + hexadecanoyl-CoA = 1,2-dihexadecanoyl-sn-glycero-3-phospho-(1D-myo-inositol) + CoA</text>
        <dbReference type="Rhea" id="RHEA:35871"/>
        <dbReference type="ChEBI" id="CHEBI:57287"/>
        <dbReference type="ChEBI" id="CHEBI:57379"/>
        <dbReference type="ChEBI" id="CHEBI:72833"/>
        <dbReference type="ChEBI" id="CHEBI:72835"/>
    </reaction>
    <physiologicalReaction direction="left-to-right" evidence="1">
        <dbReference type="Rhea" id="RHEA:35872"/>
    </physiologicalReaction>
</comment>
<comment type="catalytic activity">
    <reaction evidence="1">
        <text>1-hexadecanoyl-sn-glycero-3-phospho-(1D-myo-inositol) + octadecanoyl-CoA = 1-hexadecanoyl-2-octadecanoyl-sn-glycero-3-phospho-(1D-myo-inositol) + CoA</text>
        <dbReference type="Rhea" id="RHEA:35875"/>
        <dbReference type="ChEBI" id="CHEBI:57287"/>
        <dbReference type="ChEBI" id="CHEBI:57394"/>
        <dbReference type="ChEBI" id="CHEBI:72833"/>
        <dbReference type="ChEBI" id="CHEBI:72836"/>
    </reaction>
    <physiologicalReaction direction="left-to-right" evidence="1">
        <dbReference type="Rhea" id="RHEA:35876"/>
    </physiologicalReaction>
</comment>
<comment type="catalytic activity">
    <reaction evidence="1">
        <text>1-hexadecanoyl-sn-glycero-3-phospho-(1D-myo-inositol) + (9Z)-octadecenoyl-CoA = 1-hexadecanoyl-2-(9Z-octadecenoyl)-sn-glycero-3-phospho-(1D-myo-inositol) + CoA</text>
        <dbReference type="Rhea" id="RHEA:35879"/>
        <dbReference type="ChEBI" id="CHEBI:57287"/>
        <dbReference type="ChEBI" id="CHEBI:57387"/>
        <dbReference type="ChEBI" id="CHEBI:72833"/>
        <dbReference type="ChEBI" id="CHEBI:72837"/>
    </reaction>
    <physiologicalReaction direction="left-to-right" evidence="1">
        <dbReference type="Rhea" id="RHEA:35880"/>
    </physiologicalReaction>
</comment>
<comment type="catalytic activity">
    <reaction evidence="1">
        <text>1-hexadecanoyl-sn-glycero-3-phospho-(1D-myo-inositol) + (9Z,12Z)-octadecadienoyl-CoA = 1-hexadecanoyl-2-(9Z,12Z-octadecadienoyl)-sn-glycero-3-phospho-(1D-myo-inositol) + CoA</text>
        <dbReference type="Rhea" id="RHEA:35883"/>
        <dbReference type="ChEBI" id="CHEBI:57287"/>
        <dbReference type="ChEBI" id="CHEBI:57383"/>
        <dbReference type="ChEBI" id="CHEBI:72833"/>
        <dbReference type="ChEBI" id="CHEBI:72838"/>
    </reaction>
    <physiologicalReaction direction="left-to-right" evidence="1">
        <dbReference type="Rhea" id="RHEA:35884"/>
    </physiologicalReaction>
</comment>
<comment type="catalytic activity">
    <reaction evidence="1">
        <text>1-hexadecanoyl-sn-glycero-3-phospho-(1D-myo-inositol) + (5Z,8Z,11Z,14Z)-eicosatetraenoyl-CoA = 1-hexadecanoyl-2-(5Z,8Z,11Z,14Z-eicosatetraenoyl)-sn-glycero-3-phospho-D-myo-inositol + CoA</text>
        <dbReference type="Rhea" id="RHEA:35867"/>
        <dbReference type="ChEBI" id="CHEBI:57287"/>
        <dbReference type="ChEBI" id="CHEBI:57368"/>
        <dbReference type="ChEBI" id="CHEBI:72833"/>
        <dbReference type="ChEBI" id="CHEBI:72834"/>
    </reaction>
    <physiologicalReaction direction="left-to-right" evidence="1">
        <dbReference type="Rhea" id="RHEA:35868"/>
    </physiologicalReaction>
</comment>
<comment type="catalytic activity">
    <reaction evidence="1">
        <text>1-hexadecanoyl-sn-glycero-3-phospho-(1'-sn-glycerol) + hexadecanoyl-CoA = 1,2-dihexadecanoyl-sn-glycero-3-phospho-(1'-sn-glycerol) + CoA</text>
        <dbReference type="Rhea" id="RHEA:35851"/>
        <dbReference type="ChEBI" id="CHEBI:57287"/>
        <dbReference type="ChEBI" id="CHEBI:57379"/>
        <dbReference type="ChEBI" id="CHEBI:72829"/>
        <dbReference type="ChEBI" id="CHEBI:75158"/>
    </reaction>
    <physiologicalReaction direction="left-to-right" evidence="1">
        <dbReference type="Rhea" id="RHEA:35852"/>
    </physiologicalReaction>
</comment>
<comment type="catalytic activity">
    <reaction evidence="1">
        <text>1-hexadecanoyl-sn-glycero-3-phospho-(1'-sn-glycerol) + octadecanoyl-CoA = 1-hexadecanoyl-2-octadecanoyl-sn-glycero-3-phospho-(1'-sn-glycerol) + CoA</text>
        <dbReference type="Rhea" id="RHEA:35887"/>
        <dbReference type="ChEBI" id="CHEBI:57287"/>
        <dbReference type="ChEBI" id="CHEBI:57394"/>
        <dbReference type="ChEBI" id="CHEBI:72839"/>
        <dbReference type="ChEBI" id="CHEBI:75158"/>
    </reaction>
    <physiologicalReaction direction="left-to-right" evidence="1">
        <dbReference type="Rhea" id="RHEA:35888"/>
    </physiologicalReaction>
</comment>
<comment type="catalytic activity">
    <reaction evidence="1">
        <text>1-hexadecanoyl-sn-glycero-3-phospho-(1'-sn-glycerol) + (9Z)-octadecenoyl-CoA = 1-hexadecanoyl-2-(9Z-octadecenoyl)-sn-glycero-3-phospho-(1'-sn-glycerol) + CoA</text>
        <dbReference type="Rhea" id="RHEA:35891"/>
        <dbReference type="ChEBI" id="CHEBI:57287"/>
        <dbReference type="ChEBI" id="CHEBI:57387"/>
        <dbReference type="ChEBI" id="CHEBI:72841"/>
        <dbReference type="ChEBI" id="CHEBI:75158"/>
    </reaction>
    <physiologicalReaction direction="left-to-right" evidence="1">
        <dbReference type="Rhea" id="RHEA:35892"/>
    </physiologicalReaction>
</comment>
<comment type="catalytic activity">
    <reaction evidence="1">
        <text>1-hexadecanoyl-sn-glycero-3-phospho-(1'-sn-glycerol) + (9Z,12Z)-octadecadienoyl-CoA = 1-hexadecanoyl-2-(9Z,12Z-octadecadienoyl)-sn-glycero-3-phospho-(1'-sn-glycerol) + CoA</text>
        <dbReference type="Rhea" id="RHEA:35895"/>
        <dbReference type="ChEBI" id="CHEBI:57287"/>
        <dbReference type="ChEBI" id="CHEBI:57383"/>
        <dbReference type="ChEBI" id="CHEBI:72840"/>
        <dbReference type="ChEBI" id="CHEBI:75158"/>
    </reaction>
    <physiologicalReaction direction="left-to-right" evidence="1">
        <dbReference type="Rhea" id="RHEA:35896"/>
    </physiologicalReaction>
</comment>
<comment type="catalytic activity">
    <reaction evidence="1">
        <text>1-tetradecanoyl-sn-glycero-3-phospho-(1'-sn-glycerol) + (9Z)-octadecenoyl-CoA = 1-tetradecanoyl-2-(9Z-octadecenoyl)-sn-glycero-3-phospho-(1'-sn-glycerol) + CoA</text>
        <dbReference type="Rhea" id="RHEA:37643"/>
        <dbReference type="ChEBI" id="CHEBI:57287"/>
        <dbReference type="ChEBI" id="CHEBI:57387"/>
        <dbReference type="ChEBI" id="CHEBI:72826"/>
        <dbReference type="ChEBI" id="CHEBI:75161"/>
    </reaction>
    <physiologicalReaction direction="left-to-right" evidence="1">
        <dbReference type="Rhea" id="RHEA:37644"/>
    </physiologicalReaction>
</comment>
<comment type="catalytic activity">
    <reaction evidence="1">
        <text>1-octadecanoyl-sn-glycero-3-phospho-(1'-sn-glycerol) + (9Z)-octadecenoyl-CoA = 1-octadecanoyl-2-(9Z-octadecenoyl)-sn-glycero-3-phospho-(1'-sn-glycerol) + CoA</text>
        <dbReference type="Rhea" id="RHEA:37647"/>
        <dbReference type="ChEBI" id="CHEBI:57287"/>
        <dbReference type="ChEBI" id="CHEBI:57387"/>
        <dbReference type="ChEBI" id="CHEBI:72827"/>
        <dbReference type="ChEBI" id="CHEBI:72845"/>
    </reaction>
    <physiologicalReaction direction="left-to-right" evidence="1">
        <dbReference type="Rhea" id="RHEA:37648"/>
    </physiologicalReaction>
</comment>
<comment type="catalytic activity">
    <reaction evidence="1">
        <text>1-(9Z-octadecenoyl)-sn-glycero-3-phospho-(1'-sn-glycerol) + (9Z)-octadecenoyl-CoA = 1,2-di-(9Z-octadecenoyl)-sn-glycero-3-phospho-(1'-sn-glycerol) + CoA</text>
        <dbReference type="Rhea" id="RHEA:37651"/>
        <dbReference type="ChEBI" id="CHEBI:57287"/>
        <dbReference type="ChEBI" id="CHEBI:57387"/>
        <dbReference type="ChEBI" id="CHEBI:72828"/>
        <dbReference type="ChEBI" id="CHEBI:75163"/>
    </reaction>
    <physiologicalReaction direction="left-to-right" evidence="1">
        <dbReference type="Rhea" id="RHEA:37652"/>
    </physiologicalReaction>
</comment>
<comment type="catalytic activity">
    <reaction evidence="1">
        <text>1-hexadecanoyl-sn-glycero-3-phospho-(1D-myo-inositol) + dodecanoyl-CoA = 1-hexadecanoyl-2-dodecanoyl-sn-glycero-3-phospho-(1D-myo-inositol) + CoA</text>
        <dbReference type="Rhea" id="RHEA:37639"/>
        <dbReference type="ChEBI" id="CHEBI:57287"/>
        <dbReference type="ChEBI" id="CHEBI:57375"/>
        <dbReference type="ChEBI" id="CHEBI:72833"/>
        <dbReference type="ChEBI" id="CHEBI:75160"/>
    </reaction>
    <physiologicalReaction direction="left-to-right" evidence="1">
        <dbReference type="Rhea" id="RHEA:37640"/>
    </physiologicalReaction>
</comment>
<comment type="catalytic activity">
    <reaction evidence="4">
        <text>1',3'-bis-[1-acyl-sn-glycero-3-phospho]-glycerol + (9Z)-octadecenoyl-CoA = 1'-[1-acyl-2-(9Z)-octadecenoyl-sn-glycero-3-phospho],3'-[1-acyl,2-hydroxy-sn-glycero-3-phospho]-glycerol + CoA</text>
        <dbReference type="Rhea" id="RHEA:37615"/>
        <dbReference type="ChEBI" id="CHEBI:57287"/>
        <dbReference type="ChEBI" id="CHEBI:57387"/>
        <dbReference type="ChEBI" id="CHEBI:75137"/>
        <dbReference type="ChEBI" id="CHEBI:75139"/>
    </reaction>
    <physiologicalReaction direction="left-to-right" evidence="10">
        <dbReference type="Rhea" id="RHEA:37616"/>
    </physiologicalReaction>
</comment>
<comment type="catalytic activity">
    <reaction evidence="4">
        <text>1'-[1,2-diacyl-sn-glycero-3-phospho],3'-[1-acyl-sn-glycero-3-phospho]-glycerol + (9Z)-octadecenoyl-CoA = 1'-[1,2-diacyl-sn-glycero-3-phospho],3'-[1-acyl,2-(9Z)-octadecenoyl-sn-glycero-3-phospho]-glycerol + CoA</text>
        <dbReference type="Rhea" id="RHEA:37611"/>
        <dbReference type="ChEBI" id="CHEBI:57287"/>
        <dbReference type="ChEBI" id="CHEBI:57387"/>
        <dbReference type="ChEBI" id="CHEBI:64743"/>
        <dbReference type="ChEBI" id="CHEBI:75140"/>
    </reaction>
    <physiologicalReaction direction="left-to-right" evidence="10">
        <dbReference type="Rhea" id="RHEA:37612"/>
    </physiologicalReaction>
</comment>
<comment type="catalytic activity">
    <reaction evidence="4">
        <text>1'-[1,2-diacyl-sn-glycero-3-phospho],3'-[1-acyl-sn-glycero-3-phospho]-glycerol + (9Z,12Z)-octadecadienoyl-CoA = 1'-[1,2-diacyl-sn-glycero-3-phospho],3'-[1-acyl,2-(9Z,12Z)-octadecadienoyl-sn-glycero-3-phospho]-glycerol + CoA</text>
        <dbReference type="Rhea" id="RHEA:37675"/>
        <dbReference type="ChEBI" id="CHEBI:57287"/>
        <dbReference type="ChEBI" id="CHEBI:57383"/>
        <dbReference type="ChEBI" id="CHEBI:64743"/>
        <dbReference type="ChEBI" id="CHEBI:75205"/>
    </reaction>
    <physiologicalReaction direction="left-to-right" evidence="10">
        <dbReference type="Rhea" id="RHEA:37676"/>
    </physiologicalReaction>
</comment>
<comment type="catalytic activity">
    <reaction evidence="4">
        <text>1'-[1,2-diacyl-sn-glycero-3-phospho],3'-[1-acyl-sn-glycero-3-phospho]-glycerol + dodecanoyl-CoA = 1'-[1,2-diacyl-sn-glycero-3-phospho],3'-[1-acyl,2-dodecanoyl-sn-glycero-3-phospho]-glycerol + CoA</text>
        <dbReference type="Rhea" id="RHEA:37679"/>
        <dbReference type="ChEBI" id="CHEBI:57287"/>
        <dbReference type="ChEBI" id="CHEBI:57375"/>
        <dbReference type="ChEBI" id="CHEBI:64743"/>
        <dbReference type="ChEBI" id="CHEBI:75203"/>
    </reaction>
    <physiologicalReaction direction="left-to-right" evidence="10">
        <dbReference type="Rhea" id="RHEA:37680"/>
    </physiologicalReaction>
</comment>
<comment type="catalytic activity">
    <reaction evidence="4">
        <text>1',3'-bis-[1-acyl-sn-glycero-3-phospho]-glycerol + dodecanoyl-CoA = 1'-[1-acyl-2-dodecanoyl-sn-glycero-3-phospho],3'-[1-acyl,2-hydroxy-sn-glycero-3-phospho]-glycerol + CoA</text>
        <dbReference type="Rhea" id="RHEA:37683"/>
        <dbReference type="ChEBI" id="CHEBI:57287"/>
        <dbReference type="ChEBI" id="CHEBI:57375"/>
        <dbReference type="ChEBI" id="CHEBI:75137"/>
        <dbReference type="ChEBI" id="CHEBI:75201"/>
    </reaction>
    <physiologicalReaction direction="left-to-right" evidence="10">
        <dbReference type="Rhea" id="RHEA:37684"/>
    </physiologicalReaction>
</comment>
<comment type="catalytic activity">
    <reaction evidence="4">
        <text>a 1-acyl-sn-glycero-3-phosphate + (9Z)-octadecenoyl-CoA = a 1-acyl-2-(9Z-octadecenoyl)-sn-glycero-3-phosphate + CoA</text>
        <dbReference type="Rhea" id="RHEA:37427"/>
        <dbReference type="ChEBI" id="CHEBI:57287"/>
        <dbReference type="ChEBI" id="CHEBI:57387"/>
        <dbReference type="ChEBI" id="CHEBI:57970"/>
        <dbReference type="ChEBI" id="CHEBI:74917"/>
    </reaction>
    <physiologicalReaction direction="left-to-right" evidence="10">
        <dbReference type="Rhea" id="RHEA:37428"/>
    </physiologicalReaction>
</comment>
<comment type="catalytic activity">
    <reaction evidence="4">
        <text>1',3'-bis-[1-acyl-sn-glycero-3-phospho]-glycerol + (9Z,12Z)-octadecadienoyl-CoA = 1'-[1-acyl-2-(9Z,12Z)-octadecadienoyl-sn-glycero-3-phospho],3'-[1-acyl,2-hydroxy-sn-glycero-3-phospho]-glycerol + CoA</text>
        <dbReference type="Rhea" id="RHEA:37687"/>
        <dbReference type="ChEBI" id="CHEBI:57287"/>
        <dbReference type="ChEBI" id="CHEBI:57383"/>
        <dbReference type="ChEBI" id="CHEBI:75137"/>
        <dbReference type="ChEBI" id="CHEBI:75209"/>
    </reaction>
    <physiologicalReaction direction="left-to-right" evidence="10">
        <dbReference type="Rhea" id="RHEA:37688"/>
    </physiologicalReaction>
</comment>
<comment type="catalytic activity">
    <reaction evidence="4">
        <text>1',3'-bis-[1-acyl-sn-glycero-3-phospho]-glycerol + hexadecanoyl-CoA = 1'-[1-acyl-2-hexadecanoyl-sn-glycero-3-phospho],3'-[1-acyl,2-hydroxy-sn-glycero-3-phospho]-glycerol + CoA</text>
        <dbReference type="Rhea" id="RHEA:37691"/>
        <dbReference type="ChEBI" id="CHEBI:57287"/>
        <dbReference type="ChEBI" id="CHEBI:57379"/>
        <dbReference type="ChEBI" id="CHEBI:75137"/>
        <dbReference type="ChEBI" id="CHEBI:75207"/>
    </reaction>
    <physiologicalReaction direction="left-to-right" evidence="10">
        <dbReference type="Rhea" id="RHEA:37692"/>
    </physiologicalReaction>
</comment>
<comment type="catalytic activity">
    <reaction evidence="4">
        <text>1',3'-bis-[1-acyl-sn-glycero-3-phospho]-glycerol + octadecanoyl-CoA = 1'-[1-acyl-2-octadecanoyl-sn-glycero-3-phospho],3'-[1-acyl,2-hydroxy-sn-glycero-3-phospho]-glycerol + CoA</text>
        <dbReference type="Rhea" id="RHEA:37695"/>
        <dbReference type="ChEBI" id="CHEBI:57287"/>
        <dbReference type="ChEBI" id="CHEBI:57394"/>
        <dbReference type="ChEBI" id="CHEBI:75137"/>
        <dbReference type="ChEBI" id="CHEBI:75208"/>
    </reaction>
    <physiologicalReaction direction="left-to-right" evidence="10">
        <dbReference type="Rhea" id="RHEA:37696"/>
    </physiologicalReaction>
</comment>
<comment type="catalytic activity">
    <reaction evidence="4">
        <text>1'-[1,2-diacyl-sn-glycero-3-phospho],3'-[1-acyl-sn-glycero-3-phospho]-glycerol + octanoyl-CoA = 1'-[1,2-diacyl-sn-glycero-3-phospho],3'-[1-acyl,2-octanoyl-sn-glycero-3-phospho]-glycerol + CoA</text>
        <dbReference type="Rhea" id="RHEA:38623"/>
        <dbReference type="ChEBI" id="CHEBI:57287"/>
        <dbReference type="ChEBI" id="CHEBI:57386"/>
        <dbReference type="ChEBI" id="CHEBI:64743"/>
        <dbReference type="ChEBI" id="CHEBI:75990"/>
    </reaction>
    <physiologicalReaction direction="left-to-right" evidence="10">
        <dbReference type="Rhea" id="RHEA:38624"/>
    </physiologicalReaction>
</comment>
<comment type="catalytic activity">
    <reaction evidence="4">
        <text>1',3'-bis-[1-acyl-sn-glycero-3-phospho]-glycerol + octanoyl-CoA = 1'-[1-acyl-2-octanoyl-sn-glycero-3-phospho],3'-[1-acyl,2-hydroxy-sn-glycero-3-phospho]-glycerol + CoA</text>
        <dbReference type="Rhea" id="RHEA:38627"/>
        <dbReference type="ChEBI" id="CHEBI:57287"/>
        <dbReference type="ChEBI" id="CHEBI:57386"/>
        <dbReference type="ChEBI" id="CHEBI:75137"/>
        <dbReference type="ChEBI" id="CHEBI:75993"/>
    </reaction>
    <physiologicalReaction direction="left-to-right" evidence="10">
        <dbReference type="Rhea" id="RHEA:38628"/>
    </physiologicalReaction>
</comment>
<comment type="catalytic activity">
    <reaction evidence="4">
        <text>1'-[1,2-diacyl-sn-glycero-3-phospho],3'-[1-acyl-sn-glycero-3-phospho]-glycerol + hexadecanoyl-CoA = 1'-[1,2-diacyl-sn-glycero-3-phospho],3'-[1-acyl,2-hexadecanoyl-sn-glycero-3-phospho]-glycerol + CoA</text>
        <dbReference type="Rhea" id="RHEA:38631"/>
        <dbReference type="ChEBI" id="CHEBI:57287"/>
        <dbReference type="ChEBI" id="CHEBI:57379"/>
        <dbReference type="ChEBI" id="CHEBI:64743"/>
        <dbReference type="ChEBI" id="CHEBI:75994"/>
    </reaction>
    <physiologicalReaction direction="left-to-right" evidence="10">
        <dbReference type="Rhea" id="RHEA:38632"/>
    </physiologicalReaction>
</comment>
<comment type="catalytic activity">
    <reaction evidence="4">
        <text>1'-[1,2-diacyl-sn-glycero-3-phospho],3'-[1-acyl-sn-glycero-3-phospho]-glycerol + (5Z,8Z,11Z,14Z)-eicosatetraenoyl-CoA = 1'-[1,2-diacyl-sn-glycero-3-phospho],3'-[1-acyl,2-(5Z,8Z,11Z,14Z)-eicosatetraenoyl-sn-glycero-3-phospho]-glycerol + CoA</text>
        <dbReference type="Rhea" id="RHEA:38635"/>
        <dbReference type="ChEBI" id="CHEBI:57287"/>
        <dbReference type="ChEBI" id="CHEBI:57368"/>
        <dbReference type="ChEBI" id="CHEBI:64743"/>
        <dbReference type="ChEBI" id="CHEBI:75995"/>
    </reaction>
    <physiologicalReaction direction="left-to-right" evidence="10">
        <dbReference type="Rhea" id="RHEA:38636"/>
    </physiologicalReaction>
</comment>
<comment type="catalytic activity">
    <reaction evidence="4">
        <text>1',3'-bis-[1-acyl-sn-glycero-3-phospho]-glycerol + (5Z,8Z,11Z,14Z)-eicosatetraenoyl-CoA = 1'-[1-acyl-2-(5Z,8Z,11Z,14Z)-eicosatetraenoyl-sn-glycero-3-phospho],3'-[1-acyl,2-hydroxy-sn-glycero-3-phospho]-glycerol + CoA</text>
        <dbReference type="Rhea" id="RHEA:38639"/>
        <dbReference type="ChEBI" id="CHEBI:57287"/>
        <dbReference type="ChEBI" id="CHEBI:57368"/>
        <dbReference type="ChEBI" id="CHEBI:75137"/>
        <dbReference type="ChEBI" id="CHEBI:75996"/>
    </reaction>
    <physiologicalReaction direction="left-to-right" evidence="10">
        <dbReference type="Rhea" id="RHEA:38640"/>
    </physiologicalReaction>
</comment>
<comment type="catalytic activity">
    <reaction evidence="7">
        <text>a 1-acyl-sn-glycero-3-phospho-(1D-myo-inositol) + octadecanoyl-CoA = a 1-acyl-2-octadecanoyl-sn-glycero-3-phospho-(1D-myo-inositol) + CoA</text>
        <dbReference type="Rhea" id="RHEA:43960"/>
        <dbReference type="ChEBI" id="CHEBI:57287"/>
        <dbReference type="ChEBI" id="CHEBI:57394"/>
        <dbReference type="ChEBI" id="CHEBI:64771"/>
        <dbReference type="ChEBI" id="CHEBI:83939"/>
    </reaction>
    <physiologicalReaction direction="left-to-right" evidence="11">
        <dbReference type="Rhea" id="RHEA:43961"/>
    </physiologicalReaction>
</comment>
<comment type="catalytic activity">
    <reaction evidence="7">
        <text>a 2-acyl-sn-glycero-3-phospho-D-myo-inositol + octadecanoyl-CoA = 1-octadecanoyl-2-acyl-sn-glycero-3-phospho-1D-myo-inositol + CoA</text>
        <dbReference type="Rhea" id="RHEA:43964"/>
        <dbReference type="ChEBI" id="CHEBI:57287"/>
        <dbReference type="ChEBI" id="CHEBI:57394"/>
        <dbReference type="ChEBI" id="CHEBI:64872"/>
        <dbReference type="ChEBI" id="CHEBI:65055"/>
    </reaction>
    <physiologicalReaction direction="left-to-right" evidence="11">
        <dbReference type="Rhea" id="RHEA:43965"/>
    </physiologicalReaction>
</comment>
<comment type="pathway">
    <text>Phospholipid metabolism; CDP-diacylglycerol biosynthesis; CDP-diacylglycerol from sn-glycerol 3-phosphate: step 2/3.</text>
</comment>
<comment type="subcellular location">
    <subcellularLocation>
        <location evidence="4">Endoplasmic reticulum membrane</location>
        <topology evidence="3">Multi-pass membrane protein</topology>
    </subcellularLocation>
</comment>
<comment type="tissue specificity">
    <text evidence="4 5 6">Widely expressed with highest expression in heart, liver and 12.5 dpc aorta-gonad-mesonephros and lower levels in the 16 dpc fetal liver and adult bone marrow. In bone marrow, highest levels are found in B-cells compared with whole bone marrow, T-cells, erythrocytes, and granulocytes.</text>
</comment>
<comment type="domain">
    <text evidence="2">The HXXXXD motif is essential for acyltransferase activity and may constitute the binding site for the phosphate moiety of the glycerol-3-phosphate.</text>
</comment>
<comment type="similarity">
    <text evidence="9">Belongs to the 1-acyl-sn-glycerol-3-phosphate acyltransferase family.</text>
</comment>